<comment type="similarity">
    <text evidence="1">Belongs to the bacterial ribosomal protein bL34 family.</text>
</comment>
<accession>A4T4T9</accession>
<proteinExistence type="inferred from homology"/>
<sequence>MAKGKRTFQPNNRRRAKVHGFRLRMRTRAGRAIVTARRAKGRRSLTA</sequence>
<gene>
    <name evidence="1" type="primary">rpmH</name>
    <name type="ordered locus">Mflv_0828</name>
</gene>
<reference key="1">
    <citation type="submission" date="2007-04" db="EMBL/GenBank/DDBJ databases">
        <title>Complete sequence of chromosome of Mycobacterium gilvum PYR-GCK.</title>
        <authorList>
            <consortium name="US DOE Joint Genome Institute"/>
            <person name="Copeland A."/>
            <person name="Lucas S."/>
            <person name="Lapidus A."/>
            <person name="Barry K."/>
            <person name="Detter J.C."/>
            <person name="Glavina del Rio T."/>
            <person name="Hammon N."/>
            <person name="Israni S."/>
            <person name="Dalin E."/>
            <person name="Tice H."/>
            <person name="Pitluck S."/>
            <person name="Chain P."/>
            <person name="Malfatti S."/>
            <person name="Shin M."/>
            <person name="Vergez L."/>
            <person name="Schmutz J."/>
            <person name="Larimer F."/>
            <person name="Land M."/>
            <person name="Hauser L."/>
            <person name="Kyrpides N."/>
            <person name="Mikhailova N."/>
            <person name="Miller C."/>
            <person name="Richardson P."/>
        </authorList>
    </citation>
    <scope>NUCLEOTIDE SEQUENCE [LARGE SCALE GENOMIC DNA]</scope>
    <source>
        <strain>PYR-GCK</strain>
    </source>
</reference>
<organism>
    <name type="scientific">Mycolicibacterium gilvum (strain PYR-GCK)</name>
    <name type="common">Mycobacterium gilvum (strain PYR-GCK)</name>
    <dbReference type="NCBI Taxonomy" id="350054"/>
    <lineage>
        <taxon>Bacteria</taxon>
        <taxon>Bacillati</taxon>
        <taxon>Actinomycetota</taxon>
        <taxon>Actinomycetes</taxon>
        <taxon>Mycobacteriales</taxon>
        <taxon>Mycobacteriaceae</taxon>
        <taxon>Mycolicibacterium</taxon>
    </lineage>
</organism>
<name>RL34_MYCGI</name>
<feature type="chain" id="PRO_1000080257" description="Large ribosomal subunit protein bL34">
    <location>
        <begin position="1"/>
        <end position="47"/>
    </location>
</feature>
<evidence type="ECO:0000255" key="1">
    <source>
        <dbReference type="HAMAP-Rule" id="MF_00391"/>
    </source>
</evidence>
<evidence type="ECO:0000305" key="2"/>
<dbReference type="EMBL" id="CP000656">
    <property type="protein sequence ID" value="ABP43312.1"/>
    <property type="molecule type" value="Genomic_DNA"/>
</dbReference>
<dbReference type="SMR" id="A4T4T9"/>
<dbReference type="STRING" id="350054.Mflv_0828"/>
<dbReference type="KEGG" id="mgi:Mflv_0828"/>
<dbReference type="eggNOG" id="COG0230">
    <property type="taxonomic scope" value="Bacteria"/>
</dbReference>
<dbReference type="HOGENOM" id="CLU_129938_2_1_11"/>
<dbReference type="OrthoDB" id="9804832at2"/>
<dbReference type="GO" id="GO:1990904">
    <property type="term" value="C:ribonucleoprotein complex"/>
    <property type="evidence" value="ECO:0007669"/>
    <property type="project" value="UniProtKB-KW"/>
</dbReference>
<dbReference type="GO" id="GO:0005840">
    <property type="term" value="C:ribosome"/>
    <property type="evidence" value="ECO:0007669"/>
    <property type="project" value="UniProtKB-KW"/>
</dbReference>
<dbReference type="GO" id="GO:0003735">
    <property type="term" value="F:structural constituent of ribosome"/>
    <property type="evidence" value="ECO:0007669"/>
    <property type="project" value="InterPro"/>
</dbReference>
<dbReference type="GO" id="GO:0006412">
    <property type="term" value="P:translation"/>
    <property type="evidence" value="ECO:0007669"/>
    <property type="project" value="UniProtKB-UniRule"/>
</dbReference>
<dbReference type="FunFam" id="1.10.287.3980:FF:000001">
    <property type="entry name" value="Mitochondrial ribosomal protein L34"/>
    <property type="match status" value="1"/>
</dbReference>
<dbReference type="Gene3D" id="1.10.287.3980">
    <property type="match status" value="1"/>
</dbReference>
<dbReference type="HAMAP" id="MF_00391">
    <property type="entry name" value="Ribosomal_bL34"/>
    <property type="match status" value="1"/>
</dbReference>
<dbReference type="InterPro" id="IPR000271">
    <property type="entry name" value="Ribosomal_bL34"/>
</dbReference>
<dbReference type="InterPro" id="IPR020939">
    <property type="entry name" value="Ribosomal_bL34_CS"/>
</dbReference>
<dbReference type="NCBIfam" id="TIGR01030">
    <property type="entry name" value="rpmH_bact"/>
    <property type="match status" value="1"/>
</dbReference>
<dbReference type="PANTHER" id="PTHR14503:SF4">
    <property type="entry name" value="LARGE RIBOSOMAL SUBUNIT PROTEIN BL34M"/>
    <property type="match status" value="1"/>
</dbReference>
<dbReference type="PANTHER" id="PTHR14503">
    <property type="entry name" value="MITOCHONDRIAL RIBOSOMAL PROTEIN 34 FAMILY MEMBER"/>
    <property type="match status" value="1"/>
</dbReference>
<dbReference type="Pfam" id="PF00468">
    <property type="entry name" value="Ribosomal_L34"/>
    <property type="match status" value="1"/>
</dbReference>
<dbReference type="PROSITE" id="PS00784">
    <property type="entry name" value="RIBOSOMAL_L34"/>
    <property type="match status" value="1"/>
</dbReference>
<keyword id="KW-0687">Ribonucleoprotein</keyword>
<keyword id="KW-0689">Ribosomal protein</keyword>
<protein>
    <recommendedName>
        <fullName evidence="1">Large ribosomal subunit protein bL34</fullName>
    </recommendedName>
    <alternativeName>
        <fullName evidence="2">50S ribosomal protein L34</fullName>
    </alternativeName>
</protein>